<accession>Q7NZD1</accession>
<sequence length="508" mass="57984">MSISRSLKIVATLYRYGLDDFLEGHSRLAFLHKLFGLCPVRRDTSAPLPQRVRLALESLGPIFVKFGQVLSTRRDLLPPEYADELALLQDRVPPFDGDIARQVVERSLGRKVEELFVDFDLKPVASASVAQVHKAWLRQPDGGRGREVAVKVLRPGILPVIEQDLSLMRTLAGWVEKLFADGKRLKPREVVAEFDKYLHDELDMMHEAANASQLRRNFKGSDMLIVPEVFYDYSSREVLTLEWMHGIPVGQIERLREAGVDLQKLSRFGVEIFFTQVFRHGFFHADMHPGNIFVAADGRYIALDFGIVGSLTDTDKHYLAVNFLAFFNRDYHRVATAHIESGWVPRDTRAEELEAAVRTVCEPIFEKPLSEISFGMVLLRLFETSRRFNVEIQPQLVLLQKTLLNIEGLGRQLDPELDLWDTAKPFLTKWMNEQIGWRGLLRTLKHEAPQWATTLPTLPRKLNEALGSAKTDLLVEGYIQLMREQKRQNFLLLLIAILLAALLAKSLL</sequence>
<protein>
    <recommendedName>
        <fullName evidence="1">Probable protein kinase UbiB</fullName>
        <ecNumber evidence="1">2.7.-.-</ecNumber>
    </recommendedName>
    <alternativeName>
        <fullName evidence="1">Ubiquinone biosynthesis protein UbiB</fullName>
    </alternativeName>
</protein>
<gene>
    <name evidence="1" type="primary">ubiB</name>
    <name type="ordered locus">CV_0991</name>
</gene>
<name>UBIB_CHRVO</name>
<reference key="1">
    <citation type="journal article" date="2003" name="Proc. Natl. Acad. Sci. U.S.A.">
        <title>The complete genome sequence of Chromobacterium violaceum reveals remarkable and exploitable bacterial adaptability.</title>
        <authorList>
            <person name="Vasconcelos A.T.R."/>
            <person name="de Almeida D.F."/>
            <person name="Hungria M."/>
            <person name="Guimaraes C.T."/>
            <person name="Antonio R.V."/>
            <person name="Almeida F.C."/>
            <person name="de Almeida L.G.P."/>
            <person name="de Almeida R."/>
            <person name="Alves-Gomes J.A."/>
            <person name="Andrade E.M."/>
            <person name="Araripe J."/>
            <person name="de Araujo M.F.F."/>
            <person name="Astolfi-Filho S."/>
            <person name="Azevedo V."/>
            <person name="Baptista A.J."/>
            <person name="Bataus L.A.M."/>
            <person name="Batista J.S."/>
            <person name="Belo A."/>
            <person name="van den Berg C."/>
            <person name="Bogo M."/>
            <person name="Bonatto S."/>
            <person name="Bordignon J."/>
            <person name="Brigido M.M."/>
            <person name="Brito C.A."/>
            <person name="Brocchi M."/>
            <person name="Burity H.A."/>
            <person name="Camargo A.A."/>
            <person name="Cardoso D.D.P."/>
            <person name="Carneiro N.P."/>
            <person name="Carraro D.M."/>
            <person name="Carvalho C.M.B."/>
            <person name="Cascardo J.C.M."/>
            <person name="Cavada B.S."/>
            <person name="Chueire L.M.O."/>
            <person name="Creczynski-Pasa T.B."/>
            <person name="Cunha-Junior N.C."/>
            <person name="Fagundes N."/>
            <person name="Falcao C.L."/>
            <person name="Fantinatti F."/>
            <person name="Farias I.P."/>
            <person name="Felipe M.S.S."/>
            <person name="Ferrari L.P."/>
            <person name="Ferro J.A."/>
            <person name="Ferro M.I.T."/>
            <person name="Franco G.R."/>
            <person name="Freitas N.S.A."/>
            <person name="Furlan L.R."/>
            <person name="Gazzinelli R.T."/>
            <person name="Gomes E.A."/>
            <person name="Goncalves P.R."/>
            <person name="Grangeiro T.B."/>
            <person name="Grattapaglia D."/>
            <person name="Grisard E.C."/>
            <person name="Hanna E.S."/>
            <person name="Jardim S.N."/>
            <person name="Laurino J."/>
            <person name="Leoi L.C.T."/>
            <person name="Lima L.F.A."/>
            <person name="Loureiro M.F."/>
            <person name="Lyra M.C.C.P."/>
            <person name="Madeira H.M.F."/>
            <person name="Manfio G.P."/>
            <person name="Maranhao A.Q."/>
            <person name="Martins W.S."/>
            <person name="di Mauro S.M.Z."/>
            <person name="de Medeiros S.R.B."/>
            <person name="Meissner R.V."/>
            <person name="Moreira M.A.M."/>
            <person name="Nascimento F.F."/>
            <person name="Nicolas M.F."/>
            <person name="Oliveira J.G."/>
            <person name="Oliveira S.C."/>
            <person name="Paixao R.F.C."/>
            <person name="Parente J.A."/>
            <person name="Pedrosa F.O."/>
            <person name="Pena S.D.J."/>
            <person name="Pereira J.O."/>
            <person name="Pereira M."/>
            <person name="Pinto L.S.R.C."/>
            <person name="Pinto L.S."/>
            <person name="Porto J.I.R."/>
            <person name="Potrich D.P."/>
            <person name="Ramalho-Neto C.E."/>
            <person name="Reis A.M.M."/>
            <person name="Rigo L.U."/>
            <person name="Rondinelli E."/>
            <person name="Santos E.B.P."/>
            <person name="Santos F.R."/>
            <person name="Schneider M.P.C."/>
            <person name="Seuanez H.N."/>
            <person name="Silva A.M.R."/>
            <person name="da Silva A.L.C."/>
            <person name="Silva D.W."/>
            <person name="Silva R."/>
            <person name="Simoes I.C."/>
            <person name="Simon D."/>
            <person name="Soares C.M.A."/>
            <person name="Soares R.B.A."/>
            <person name="Souza E.M."/>
            <person name="Souza K.R.L."/>
            <person name="Souza R.C."/>
            <person name="Steffens M.B.R."/>
            <person name="Steindel M."/>
            <person name="Teixeira S.R."/>
            <person name="Urmenyi T."/>
            <person name="Vettore A."/>
            <person name="Wassem R."/>
            <person name="Zaha A."/>
            <person name="Simpson A.J.G."/>
        </authorList>
    </citation>
    <scope>NUCLEOTIDE SEQUENCE [LARGE SCALE GENOMIC DNA]</scope>
    <source>
        <strain>ATCC 12472 / DSM 30191 / JCM 1249 / CCUG 213 / NBRC 12614 / NCIMB 9131 / NCTC 9757 / MK</strain>
    </source>
</reference>
<dbReference type="EC" id="2.7.-.-" evidence="1"/>
<dbReference type="EMBL" id="AE016825">
    <property type="protein sequence ID" value="AAQ58665.1"/>
    <property type="molecule type" value="Genomic_DNA"/>
</dbReference>
<dbReference type="RefSeq" id="WP_011134546.1">
    <property type="nucleotide sequence ID" value="NC_005085.1"/>
</dbReference>
<dbReference type="SMR" id="Q7NZD1"/>
<dbReference type="STRING" id="243365.CV_0991"/>
<dbReference type="GeneID" id="66366683"/>
<dbReference type="KEGG" id="cvi:CV_0991"/>
<dbReference type="eggNOG" id="COG0661">
    <property type="taxonomic scope" value="Bacteria"/>
</dbReference>
<dbReference type="HOGENOM" id="CLU_006533_0_0_4"/>
<dbReference type="OrthoDB" id="9795390at2"/>
<dbReference type="UniPathway" id="UPA00232"/>
<dbReference type="Proteomes" id="UP000001424">
    <property type="component" value="Chromosome"/>
</dbReference>
<dbReference type="GO" id="GO:0005886">
    <property type="term" value="C:plasma membrane"/>
    <property type="evidence" value="ECO:0007669"/>
    <property type="project" value="UniProtKB-SubCell"/>
</dbReference>
<dbReference type="GO" id="GO:0005524">
    <property type="term" value="F:ATP binding"/>
    <property type="evidence" value="ECO:0007669"/>
    <property type="project" value="UniProtKB-KW"/>
</dbReference>
<dbReference type="GO" id="GO:0004672">
    <property type="term" value="F:protein kinase activity"/>
    <property type="evidence" value="ECO:0007669"/>
    <property type="project" value="UniProtKB-UniRule"/>
</dbReference>
<dbReference type="GO" id="GO:0010795">
    <property type="term" value="P:regulation of ubiquinone biosynthetic process"/>
    <property type="evidence" value="ECO:0007669"/>
    <property type="project" value="UniProtKB-UniRule"/>
</dbReference>
<dbReference type="GO" id="GO:0006744">
    <property type="term" value="P:ubiquinone biosynthetic process"/>
    <property type="evidence" value="ECO:0007669"/>
    <property type="project" value="UniProtKB-UniPathway"/>
</dbReference>
<dbReference type="CDD" id="cd13972">
    <property type="entry name" value="UbiB"/>
    <property type="match status" value="1"/>
</dbReference>
<dbReference type="Gene3D" id="1.10.510.10">
    <property type="entry name" value="Transferase(Phosphotransferase) domain 1"/>
    <property type="match status" value="1"/>
</dbReference>
<dbReference type="HAMAP" id="MF_00414">
    <property type="entry name" value="UbiB"/>
    <property type="match status" value="1"/>
</dbReference>
<dbReference type="InterPro" id="IPR004147">
    <property type="entry name" value="ABC1_dom"/>
</dbReference>
<dbReference type="InterPro" id="IPR011009">
    <property type="entry name" value="Kinase-like_dom_sf"/>
</dbReference>
<dbReference type="InterPro" id="IPR000719">
    <property type="entry name" value="Prot_kinase_dom"/>
</dbReference>
<dbReference type="InterPro" id="IPR010232">
    <property type="entry name" value="UbiB"/>
</dbReference>
<dbReference type="InterPro" id="IPR045308">
    <property type="entry name" value="UbiB_bact"/>
</dbReference>
<dbReference type="InterPro" id="IPR050154">
    <property type="entry name" value="UbiB_kinase"/>
</dbReference>
<dbReference type="NCBIfam" id="NF003404">
    <property type="entry name" value="PRK04750.1"/>
    <property type="match status" value="1"/>
</dbReference>
<dbReference type="NCBIfam" id="TIGR01982">
    <property type="entry name" value="UbiB"/>
    <property type="match status" value="1"/>
</dbReference>
<dbReference type="PANTHER" id="PTHR10566">
    <property type="entry name" value="CHAPERONE-ACTIVITY OF BC1 COMPLEX CABC1 -RELATED"/>
    <property type="match status" value="1"/>
</dbReference>
<dbReference type="PANTHER" id="PTHR10566:SF113">
    <property type="entry name" value="PROTEIN ACTIVITY OF BC1 COMPLEX KINASE 7, CHLOROPLASTIC"/>
    <property type="match status" value="1"/>
</dbReference>
<dbReference type="Pfam" id="PF03109">
    <property type="entry name" value="ABC1"/>
    <property type="match status" value="1"/>
</dbReference>
<dbReference type="SUPFAM" id="SSF56112">
    <property type="entry name" value="Protein kinase-like (PK-like)"/>
    <property type="match status" value="1"/>
</dbReference>
<dbReference type="PROSITE" id="PS50011">
    <property type="entry name" value="PROTEIN_KINASE_DOM"/>
    <property type="match status" value="1"/>
</dbReference>
<keyword id="KW-0067">ATP-binding</keyword>
<keyword id="KW-0997">Cell inner membrane</keyword>
<keyword id="KW-1003">Cell membrane</keyword>
<keyword id="KW-0418">Kinase</keyword>
<keyword id="KW-0472">Membrane</keyword>
<keyword id="KW-0547">Nucleotide-binding</keyword>
<keyword id="KW-1185">Reference proteome</keyword>
<keyword id="KW-0808">Transferase</keyword>
<keyword id="KW-0812">Transmembrane</keyword>
<keyword id="KW-1133">Transmembrane helix</keyword>
<keyword id="KW-0831">Ubiquinone biosynthesis</keyword>
<evidence type="ECO:0000255" key="1">
    <source>
        <dbReference type="HAMAP-Rule" id="MF_00414"/>
    </source>
</evidence>
<proteinExistence type="inferred from homology"/>
<organism>
    <name type="scientific">Chromobacterium violaceum (strain ATCC 12472 / DSM 30191 / JCM 1249 / CCUG 213 / NBRC 12614 / NCIMB 9131 / NCTC 9757 / MK)</name>
    <dbReference type="NCBI Taxonomy" id="243365"/>
    <lineage>
        <taxon>Bacteria</taxon>
        <taxon>Pseudomonadati</taxon>
        <taxon>Pseudomonadota</taxon>
        <taxon>Betaproteobacteria</taxon>
        <taxon>Neisseriales</taxon>
        <taxon>Chromobacteriaceae</taxon>
        <taxon>Chromobacterium</taxon>
    </lineage>
</organism>
<comment type="function">
    <text evidence="1">Is probably a protein kinase regulator of UbiI activity which is involved in aerobic coenzyme Q (ubiquinone) biosynthesis.</text>
</comment>
<comment type="pathway">
    <text>Cofactor biosynthesis; ubiquinone biosynthesis [regulation].</text>
</comment>
<comment type="subcellular location">
    <subcellularLocation>
        <location evidence="1">Cell inner membrane</location>
        <topology evidence="1">Single-pass membrane protein</topology>
    </subcellularLocation>
</comment>
<comment type="similarity">
    <text evidence="1">Belongs to the ABC1 family. UbiB subfamily.</text>
</comment>
<feature type="chain" id="PRO_0000200702" description="Probable protein kinase UbiB">
    <location>
        <begin position="1"/>
        <end position="508"/>
    </location>
</feature>
<feature type="transmembrane region" description="Helical" evidence="1">
    <location>
        <begin position="488"/>
        <end position="508"/>
    </location>
</feature>
<feature type="domain" description="Protein kinase" evidence="1">
    <location>
        <begin position="118"/>
        <end position="494"/>
    </location>
</feature>
<feature type="active site" description="Proton acceptor" evidence="1">
    <location>
        <position position="286"/>
    </location>
</feature>
<feature type="binding site" evidence="1">
    <location>
        <begin position="124"/>
        <end position="132"/>
    </location>
    <ligand>
        <name>ATP</name>
        <dbReference type="ChEBI" id="CHEBI:30616"/>
    </ligand>
</feature>
<feature type="binding site" evidence="1">
    <location>
        <position position="151"/>
    </location>
    <ligand>
        <name>ATP</name>
        <dbReference type="ChEBI" id="CHEBI:30616"/>
    </ligand>
</feature>